<sequence length="67" mass="7488">MAAKKGAKTTTKKSDYYKVEGNAVERLKKACPKCGAGVFMAEHLNRFACGKCGYMEYKKNEKTESEE</sequence>
<accession>A6VJ78</accession>
<evidence type="ECO:0000255" key="1">
    <source>
        <dbReference type="HAMAP-Rule" id="MF_00777"/>
    </source>
</evidence>
<evidence type="ECO:0000305" key="2"/>
<feature type="chain" id="PRO_1000046815" description="Small ribosomal subunit protein eS31">
    <location>
        <begin position="1"/>
        <end position="67"/>
    </location>
</feature>
<feature type="zinc finger region" description="C4-type" evidence="1">
    <location>
        <begin position="31"/>
        <end position="52"/>
    </location>
</feature>
<feature type="binding site" evidence="1">
    <location>
        <position position="31"/>
    </location>
    <ligand>
        <name>Zn(2+)</name>
        <dbReference type="ChEBI" id="CHEBI:29105"/>
    </ligand>
</feature>
<feature type="binding site" evidence="1">
    <location>
        <position position="34"/>
    </location>
    <ligand>
        <name>Zn(2+)</name>
        <dbReference type="ChEBI" id="CHEBI:29105"/>
    </ligand>
</feature>
<feature type="binding site" evidence="1">
    <location>
        <position position="49"/>
    </location>
    <ligand>
        <name>Zn(2+)</name>
        <dbReference type="ChEBI" id="CHEBI:29105"/>
    </ligand>
</feature>
<feature type="binding site" evidence="1">
    <location>
        <position position="52"/>
    </location>
    <ligand>
        <name>Zn(2+)</name>
        <dbReference type="ChEBI" id="CHEBI:29105"/>
    </ligand>
</feature>
<gene>
    <name evidence="1" type="primary">rps27ae</name>
    <name type="ordered locus">MmarC7_1441</name>
</gene>
<name>RS27A_METM7</name>
<keyword id="KW-0479">Metal-binding</keyword>
<keyword id="KW-0687">Ribonucleoprotein</keyword>
<keyword id="KW-0689">Ribosomal protein</keyword>
<keyword id="KW-0862">Zinc</keyword>
<keyword id="KW-0863">Zinc-finger</keyword>
<organism>
    <name type="scientific">Methanococcus maripaludis (strain C7 / ATCC BAA-1331)</name>
    <dbReference type="NCBI Taxonomy" id="426368"/>
    <lineage>
        <taxon>Archaea</taxon>
        <taxon>Methanobacteriati</taxon>
        <taxon>Methanobacteriota</taxon>
        <taxon>Methanomada group</taxon>
        <taxon>Methanococci</taxon>
        <taxon>Methanococcales</taxon>
        <taxon>Methanococcaceae</taxon>
        <taxon>Methanococcus</taxon>
    </lineage>
</organism>
<comment type="cofactor">
    <cofactor evidence="1">
        <name>Zn(2+)</name>
        <dbReference type="ChEBI" id="CHEBI:29105"/>
    </cofactor>
    <text evidence="1">Binds 1 zinc ion per subunit.</text>
</comment>
<comment type="subunit">
    <text evidence="1">Part of the 30S ribosomal subunit.</text>
</comment>
<comment type="similarity">
    <text evidence="1">Belongs to the eukaryotic ribosomal protein eS31 family.</text>
</comment>
<dbReference type="EMBL" id="CP000745">
    <property type="protein sequence ID" value="ABR66504.1"/>
    <property type="molecule type" value="Genomic_DNA"/>
</dbReference>
<dbReference type="SMR" id="A6VJ78"/>
<dbReference type="STRING" id="426368.MmarC7_1441"/>
<dbReference type="KEGG" id="mmz:MmarC7_1441"/>
<dbReference type="eggNOG" id="arCOG04183">
    <property type="taxonomic scope" value="Archaea"/>
</dbReference>
<dbReference type="HOGENOM" id="CLU_179743_2_0_2"/>
<dbReference type="OrthoDB" id="25142at2157"/>
<dbReference type="GO" id="GO:1990904">
    <property type="term" value="C:ribonucleoprotein complex"/>
    <property type="evidence" value="ECO:0007669"/>
    <property type="project" value="UniProtKB-KW"/>
</dbReference>
<dbReference type="GO" id="GO:0005840">
    <property type="term" value="C:ribosome"/>
    <property type="evidence" value="ECO:0007669"/>
    <property type="project" value="UniProtKB-KW"/>
</dbReference>
<dbReference type="GO" id="GO:0003735">
    <property type="term" value="F:structural constituent of ribosome"/>
    <property type="evidence" value="ECO:0007669"/>
    <property type="project" value="InterPro"/>
</dbReference>
<dbReference type="GO" id="GO:0008270">
    <property type="term" value="F:zinc ion binding"/>
    <property type="evidence" value="ECO:0007669"/>
    <property type="project" value="UniProtKB-UniRule"/>
</dbReference>
<dbReference type="GO" id="GO:0006412">
    <property type="term" value="P:translation"/>
    <property type="evidence" value="ECO:0007669"/>
    <property type="project" value="UniProtKB-UniRule"/>
</dbReference>
<dbReference type="Gene3D" id="6.20.50.180">
    <property type="match status" value="1"/>
</dbReference>
<dbReference type="HAMAP" id="MF_00777">
    <property type="entry name" value="Ribosomal_eS31"/>
    <property type="match status" value="1"/>
</dbReference>
<dbReference type="InterPro" id="IPR002906">
    <property type="entry name" value="Ribosomal_eS31"/>
</dbReference>
<dbReference type="InterPro" id="IPR022845">
    <property type="entry name" value="Ribosomal_eS31_arc"/>
</dbReference>
<dbReference type="InterPro" id="IPR011332">
    <property type="entry name" value="Ribosomal_zn-bd"/>
</dbReference>
<dbReference type="NCBIfam" id="NF001669">
    <property type="entry name" value="PRK00432.1"/>
    <property type="match status" value="1"/>
</dbReference>
<dbReference type="Pfam" id="PF01599">
    <property type="entry name" value="Ribosomal_S27"/>
    <property type="match status" value="1"/>
</dbReference>
<dbReference type="SMART" id="SM01402">
    <property type="entry name" value="Ribosomal_S27"/>
    <property type="match status" value="1"/>
</dbReference>
<dbReference type="SUPFAM" id="SSF57829">
    <property type="entry name" value="Zn-binding ribosomal proteins"/>
    <property type="match status" value="1"/>
</dbReference>
<reference key="1">
    <citation type="submission" date="2007-06" db="EMBL/GenBank/DDBJ databases">
        <title>Complete sequence of Methanococcus maripaludis C7.</title>
        <authorList>
            <consortium name="US DOE Joint Genome Institute"/>
            <person name="Copeland A."/>
            <person name="Lucas S."/>
            <person name="Lapidus A."/>
            <person name="Barry K."/>
            <person name="Glavina del Rio T."/>
            <person name="Dalin E."/>
            <person name="Tice H."/>
            <person name="Pitluck S."/>
            <person name="Clum A."/>
            <person name="Schmutz J."/>
            <person name="Larimer F."/>
            <person name="Land M."/>
            <person name="Hauser L."/>
            <person name="Kyrpides N."/>
            <person name="Anderson I."/>
            <person name="Sieprawska-Lupa M."/>
            <person name="Whitman W.B."/>
            <person name="Richardson P."/>
        </authorList>
    </citation>
    <scope>NUCLEOTIDE SEQUENCE [LARGE SCALE GENOMIC DNA]</scope>
    <source>
        <strain>C7 / ATCC BAA-1331</strain>
    </source>
</reference>
<protein>
    <recommendedName>
        <fullName evidence="1">Small ribosomal subunit protein eS31</fullName>
    </recommendedName>
    <alternativeName>
        <fullName evidence="2">30S ribosomal protein S27ae</fullName>
    </alternativeName>
</protein>
<proteinExistence type="inferred from homology"/>